<organism>
    <name type="scientific">Yersinia pseudotuberculosis serotype O:1b (strain IP 31758)</name>
    <dbReference type="NCBI Taxonomy" id="349747"/>
    <lineage>
        <taxon>Bacteria</taxon>
        <taxon>Pseudomonadati</taxon>
        <taxon>Pseudomonadota</taxon>
        <taxon>Gammaproteobacteria</taxon>
        <taxon>Enterobacterales</taxon>
        <taxon>Yersiniaceae</taxon>
        <taxon>Yersinia</taxon>
    </lineage>
</organism>
<protein>
    <recommendedName>
        <fullName evidence="1">N-acetylneuraminate epimerase</fullName>
        <ecNumber evidence="1">5.1.3.24</ecNumber>
    </recommendedName>
    <alternativeName>
        <fullName evidence="1">N-acetylneuraminate mutarotase</fullName>
        <shortName evidence="1">Neu5Ac mutarotase</shortName>
    </alternativeName>
    <alternativeName>
        <fullName evidence="1">Sialic acid epimerase</fullName>
    </alternativeName>
</protein>
<evidence type="ECO:0000255" key="1">
    <source>
        <dbReference type="HAMAP-Rule" id="MF_01195"/>
    </source>
</evidence>
<keyword id="KW-0119">Carbohydrate metabolism</keyword>
<keyword id="KW-0413">Isomerase</keyword>
<keyword id="KW-0880">Kelch repeat</keyword>
<keyword id="KW-0574">Periplasm</keyword>
<keyword id="KW-0677">Repeat</keyword>
<keyword id="KW-0732">Signal</keyword>
<gene>
    <name evidence="1" type="primary">nanM</name>
    <name type="ordered locus">YpsIP31758_2260</name>
</gene>
<sequence>MTQLYPQYKKQLTTKIVLFSALSLLMMASLPNTYAEQYPDVPVPFKNGTGGKVENSLYVGLGSAGVSWFRLDTDKTGAGWQKVANFPGQPREQAVTVVLAGKLYVFGGVGKTNANDTQVRALDDAYRFDPQTNQWQQLATRAPRGLVGTVATTLDGSQAVLLGGVNKAIFDGYFTDLASAGSDEVRKSAVINAYFNQAPADYFYNRDVLIYDPQKNQWKSGGLLPFLGTAGSAISRMDNRLILINGEIKPGLRTAAVWQGLMQGNVLEWQPQPDLIGAETGSAQEGLAGAFSGISHKTVLVAGGANFPGAWKQFNRGHLYAHQGLEKQWHQQVYALVDNQWRIAGKLPQPLGYGVSIQGPDKVILIGGETTGGTATSAVTQLSWQGGKLHIE</sequence>
<reference key="1">
    <citation type="journal article" date="2007" name="PLoS Genet.">
        <title>The complete genome sequence of Yersinia pseudotuberculosis IP31758, the causative agent of Far East scarlet-like fever.</title>
        <authorList>
            <person name="Eppinger M."/>
            <person name="Rosovitz M.J."/>
            <person name="Fricke W.F."/>
            <person name="Rasko D.A."/>
            <person name="Kokorina G."/>
            <person name="Fayolle C."/>
            <person name="Lindler L.E."/>
            <person name="Carniel E."/>
            <person name="Ravel J."/>
        </authorList>
    </citation>
    <scope>NUCLEOTIDE SEQUENCE [LARGE SCALE GENOMIC DNA]</scope>
    <source>
        <strain>IP 31758</strain>
    </source>
</reference>
<dbReference type="EC" id="5.1.3.24" evidence="1"/>
<dbReference type="EMBL" id="CP000720">
    <property type="protein sequence ID" value="ABS47479.1"/>
    <property type="molecule type" value="Genomic_DNA"/>
</dbReference>
<dbReference type="RefSeq" id="WP_002211169.1">
    <property type="nucleotide sequence ID" value="NC_009708.1"/>
</dbReference>
<dbReference type="SMR" id="A7FJ01"/>
<dbReference type="KEGG" id="ypi:YpsIP31758_2260"/>
<dbReference type="HOGENOM" id="CLU_061535_0_0_6"/>
<dbReference type="Proteomes" id="UP000002412">
    <property type="component" value="Chromosome"/>
</dbReference>
<dbReference type="GO" id="GO:0042597">
    <property type="term" value="C:periplasmic space"/>
    <property type="evidence" value="ECO:0007669"/>
    <property type="project" value="UniProtKB-SubCell"/>
</dbReference>
<dbReference type="GO" id="GO:0016857">
    <property type="term" value="F:racemase and epimerase activity, acting on carbohydrates and derivatives"/>
    <property type="evidence" value="ECO:0007669"/>
    <property type="project" value="UniProtKB-UniRule"/>
</dbReference>
<dbReference type="Gene3D" id="2.120.10.80">
    <property type="entry name" value="Kelch-type beta propeller"/>
    <property type="match status" value="1"/>
</dbReference>
<dbReference type="HAMAP" id="MF_01195">
    <property type="entry name" value="NanM"/>
    <property type="match status" value="1"/>
</dbReference>
<dbReference type="InterPro" id="IPR015915">
    <property type="entry name" value="Kelch-typ_b-propeller"/>
</dbReference>
<dbReference type="InterPro" id="IPR056734">
    <property type="entry name" value="NANM"/>
</dbReference>
<dbReference type="InterPro" id="IPR019936">
    <property type="entry name" value="NanM_proteobact"/>
</dbReference>
<dbReference type="NCBIfam" id="TIGR03547">
    <property type="entry name" value="muta_rot_YjhT"/>
    <property type="match status" value="1"/>
</dbReference>
<dbReference type="NCBIfam" id="NF010730">
    <property type="entry name" value="PRK14131.1"/>
    <property type="match status" value="1"/>
</dbReference>
<dbReference type="PANTHER" id="PTHR24412">
    <property type="entry name" value="KELCH PROTEIN"/>
    <property type="match status" value="1"/>
</dbReference>
<dbReference type="PANTHER" id="PTHR24412:SF441">
    <property type="entry name" value="KELCH-LIKE PROTEIN 28"/>
    <property type="match status" value="1"/>
</dbReference>
<dbReference type="Pfam" id="PF24996">
    <property type="entry name" value="NANM"/>
    <property type="match status" value="1"/>
</dbReference>
<dbReference type="SUPFAM" id="SSF117281">
    <property type="entry name" value="Kelch motif"/>
    <property type="match status" value="1"/>
</dbReference>
<name>NANM_YERP3</name>
<proteinExistence type="inferred from homology"/>
<accession>A7FJ01</accession>
<feature type="signal peptide" evidence="1">
    <location>
        <begin position="1"/>
        <end position="35"/>
    </location>
</feature>
<feature type="chain" id="PRO_0000333076" description="N-acetylneuraminate epimerase">
    <location>
        <begin position="36"/>
        <end position="392"/>
    </location>
</feature>
<feature type="repeat" description="Kelch 1">
    <location>
        <begin position="56"/>
        <end position="100"/>
    </location>
</feature>
<feature type="repeat" description="Kelch 2">
    <location>
        <begin position="102"/>
        <end position="155"/>
    </location>
</feature>
<feature type="repeat" description="Kelch 3">
    <location>
        <begin position="157"/>
        <end position="192"/>
    </location>
</feature>
<feature type="repeat" description="Kelch 4">
    <location>
        <begin position="193"/>
        <end position="238"/>
    </location>
</feature>
<feature type="repeat" description="Kelch 5">
    <location>
        <begin position="241"/>
        <end position="290"/>
    </location>
</feature>
<feature type="repeat" description="Kelch 6">
    <location>
        <begin position="312"/>
        <end position="361"/>
    </location>
</feature>
<feature type="repeat" description="Kelch 7">
    <location>
        <begin position="363"/>
        <end position="392"/>
    </location>
</feature>
<feature type="active site" description="Proton acceptor" evidence="1">
    <location>
        <position position="247"/>
    </location>
</feature>
<comment type="function">
    <text evidence="1">Converts alpha-N-acetylneuranimic acid (Neu5Ac) to the beta-anomer, accelerating the equilibrium between the alpha- and beta-anomers. Probably facilitates sialidase-negative bacteria to compete successfully for limited amounts of extracellular Neu5Ac, which is likely taken up in the beta-anomer. In addition, the rapid removal of sialic acid from solution might be advantageous to the bacterium to damp down host responses.</text>
</comment>
<comment type="catalytic activity">
    <reaction evidence="1">
        <text>N-acetyl-alpha-neuraminate = N-acetyl-beta-neuraminate</text>
        <dbReference type="Rhea" id="RHEA:25233"/>
        <dbReference type="ChEBI" id="CHEBI:58705"/>
        <dbReference type="ChEBI" id="CHEBI:58770"/>
        <dbReference type="EC" id="5.1.3.24"/>
    </reaction>
</comment>
<comment type="subunit">
    <text evidence="1">Homodimer.</text>
</comment>
<comment type="subcellular location">
    <subcellularLocation>
        <location evidence="1">Periplasm</location>
    </subcellularLocation>
</comment>
<comment type="similarity">
    <text evidence="1">Belongs to the NanM family.</text>
</comment>